<feature type="initiator methionine" description="Removed" evidence="2">
    <location>
        <position position="1"/>
    </location>
</feature>
<feature type="chain" id="PRO_0000094845" description="Protein phosphatase Slingshot homolog 3">
    <location>
        <begin position="2"/>
        <end position="659"/>
    </location>
</feature>
<feature type="domain" description="DEK-C" evidence="4">
    <location>
        <begin position="269"/>
        <end position="324"/>
    </location>
</feature>
<feature type="domain" description="Tyrosine-protein phosphatase" evidence="3">
    <location>
        <begin position="328"/>
        <end position="469"/>
    </location>
</feature>
<feature type="region of interest" description="Disordered" evidence="6">
    <location>
        <begin position="1"/>
        <end position="31"/>
    </location>
</feature>
<feature type="region of interest" description="Disordered" evidence="6">
    <location>
        <begin position="46"/>
        <end position="96"/>
    </location>
</feature>
<feature type="region of interest" description="Disordered" evidence="6">
    <location>
        <begin position="482"/>
        <end position="534"/>
    </location>
</feature>
<feature type="region of interest" description="Disordered" evidence="6">
    <location>
        <begin position="547"/>
        <end position="603"/>
    </location>
</feature>
<feature type="region of interest" description="Disordered" evidence="6">
    <location>
        <begin position="617"/>
        <end position="638"/>
    </location>
</feature>
<feature type="compositionally biased region" description="Polar residues" evidence="6">
    <location>
        <begin position="1"/>
        <end position="16"/>
    </location>
</feature>
<feature type="compositionally biased region" description="Basic and acidic residues" evidence="6">
    <location>
        <begin position="64"/>
        <end position="78"/>
    </location>
</feature>
<feature type="compositionally biased region" description="Polar residues" evidence="6">
    <location>
        <begin position="80"/>
        <end position="89"/>
    </location>
</feature>
<feature type="compositionally biased region" description="Low complexity" evidence="6">
    <location>
        <begin position="547"/>
        <end position="557"/>
    </location>
</feature>
<feature type="active site" description="Phosphocysteine intermediate" evidence="3">
    <location>
        <position position="413"/>
    </location>
</feature>
<feature type="modified residue" description="N-acetylalanine" evidence="2">
    <location>
        <position position="2"/>
    </location>
</feature>
<feature type="modified residue" description="Phosphoserine" evidence="11 12">
    <location>
        <position position="9"/>
    </location>
</feature>
<feature type="modified residue" description="Phosphoserine" evidence="11 12">
    <location>
        <position position="37"/>
    </location>
</feature>
<feature type="modified residue" description="Phosphoserine" evidence="10">
    <location>
        <position position="85"/>
    </location>
</feature>
<feature type="modified residue" description="Phosphoserine" evidence="10 12">
    <location>
        <position position="87"/>
    </location>
</feature>
<feature type="splice variant" id="VSP_016330" description="In isoform 5." evidence="8">
    <location>
        <begin position="1"/>
        <end position="330"/>
    </location>
</feature>
<feature type="splice variant" id="VSP_016331" description="In isoform 3." evidence="8">
    <location>
        <begin position="1"/>
        <end position="146"/>
    </location>
</feature>
<feature type="splice variant" id="VSP_016332" description="In isoform 3." evidence="8">
    <original>LGVDFPDS</original>
    <variation>MAFPLSPA</variation>
    <location>
        <begin position="147"/>
        <end position="154"/>
    </location>
</feature>
<feature type="splice variant" id="VSP_016333" description="In isoform 4." evidence="8">
    <location>
        <begin position="283"/>
        <end position="547"/>
    </location>
</feature>
<feature type="splice variant" id="VSP_016334" description="In isoform 5." evidence="8">
    <original>RIFPHLYLGSEWNAANLEELQRNRVTHILN</original>
    <variation>MEGTMMMQQRPVLSQQHPSFILNSSPAHSP</variation>
    <location>
        <begin position="331"/>
        <end position="360"/>
    </location>
</feature>
<feature type="splice variant" id="VSP_016335" description="In isoform 2 and isoform 5." evidence="7 8">
    <original>SR</original>
    <variation>RT</variation>
    <location>
        <begin position="470"/>
        <end position="471"/>
    </location>
</feature>
<feature type="splice variant" id="VSP_016336" description="In isoform 2 and isoform 5." evidence="7 8">
    <location>
        <begin position="472"/>
        <end position="659"/>
    </location>
</feature>
<feature type="sequence variant" id="VAR_057132" description="In dbSNP:rs7114712.">
    <original>E</original>
    <variation>V</variation>
    <location>
        <position position="239"/>
    </location>
</feature>
<feature type="sequence variant" id="VAR_057133" description="In dbSNP:rs1573536.">
    <original>R</original>
    <variation>H</variation>
    <location>
        <position position="600"/>
    </location>
</feature>
<feature type="sequence conflict" description="In Ref. 1 and 2." evidence="9" ref="1 2">
    <original>A</original>
    <variation>V</variation>
    <location>
        <position position="58"/>
    </location>
</feature>
<feature type="sequence conflict" description="In Ref. 3; BAC04314." evidence="9" ref="3">
    <original>E</original>
    <variation>G</variation>
    <location>
        <position position="509"/>
    </location>
</feature>
<feature type="sequence conflict" description="In Ref. 3; BAB85080." evidence="9" ref="3">
    <original>F</original>
    <variation>S</variation>
    <location>
        <position position="641"/>
    </location>
</feature>
<evidence type="ECO:0000250" key="1"/>
<evidence type="ECO:0000250" key="2">
    <source>
        <dbReference type="UniProtKB" id="Q8K330"/>
    </source>
</evidence>
<evidence type="ECO:0000255" key="3">
    <source>
        <dbReference type="PROSITE-ProRule" id="PRU00160"/>
    </source>
</evidence>
<evidence type="ECO:0000255" key="4">
    <source>
        <dbReference type="PROSITE-ProRule" id="PRU01342"/>
    </source>
</evidence>
<evidence type="ECO:0000255" key="5">
    <source>
        <dbReference type="PROSITE-ProRule" id="PRU10044"/>
    </source>
</evidence>
<evidence type="ECO:0000256" key="6">
    <source>
        <dbReference type="SAM" id="MobiDB-lite"/>
    </source>
</evidence>
<evidence type="ECO:0000303" key="7">
    <source>
    </source>
</evidence>
<evidence type="ECO:0000303" key="8">
    <source>
    </source>
</evidence>
<evidence type="ECO:0000305" key="9"/>
<evidence type="ECO:0007744" key="10">
    <source>
    </source>
</evidence>
<evidence type="ECO:0007744" key="11">
    <source>
    </source>
</evidence>
<evidence type="ECO:0007744" key="12">
    <source>
    </source>
</evidence>
<proteinExistence type="evidence at protein level"/>
<organism>
    <name type="scientific">Homo sapiens</name>
    <name type="common">Human</name>
    <dbReference type="NCBI Taxonomy" id="9606"/>
    <lineage>
        <taxon>Eukaryota</taxon>
        <taxon>Metazoa</taxon>
        <taxon>Chordata</taxon>
        <taxon>Craniata</taxon>
        <taxon>Vertebrata</taxon>
        <taxon>Euteleostomi</taxon>
        <taxon>Mammalia</taxon>
        <taxon>Eutheria</taxon>
        <taxon>Euarchontoglires</taxon>
        <taxon>Primates</taxon>
        <taxon>Haplorrhini</taxon>
        <taxon>Catarrhini</taxon>
        <taxon>Hominidae</taxon>
        <taxon>Homo</taxon>
    </lineage>
</organism>
<dbReference type="EC" id="3.1.3.16"/>
<dbReference type="EC" id="3.1.3.48"/>
<dbReference type="EMBL" id="AB072360">
    <property type="protein sequence ID" value="BAB84119.3"/>
    <property type="molecule type" value="mRNA"/>
</dbReference>
<dbReference type="EMBL" id="AB099291">
    <property type="protein sequence ID" value="BAC97814.1"/>
    <property type="molecule type" value="mRNA"/>
</dbReference>
<dbReference type="EMBL" id="AK000522">
    <property type="protein sequence ID" value="BAA91228.1"/>
    <property type="molecule type" value="mRNA"/>
</dbReference>
<dbReference type="EMBL" id="AK001790">
    <property type="protein sequence ID" value="BAA91913.1"/>
    <property type="molecule type" value="mRNA"/>
</dbReference>
<dbReference type="EMBL" id="AK074432">
    <property type="protein sequence ID" value="BAB85080.1"/>
    <property type="molecule type" value="mRNA"/>
</dbReference>
<dbReference type="EMBL" id="AK094226">
    <property type="protein sequence ID" value="BAC04314.1"/>
    <property type="molecule type" value="mRNA"/>
</dbReference>
<dbReference type="EMBL" id="BC007709">
    <property type="protein sequence ID" value="AAH07709.1"/>
    <property type="molecule type" value="mRNA"/>
</dbReference>
<dbReference type="CCDS" id="CCDS8157.1">
    <molecule id="Q8TE77-1"/>
</dbReference>
<dbReference type="RefSeq" id="NP_060327.3">
    <molecule id="Q8TE77-1"/>
    <property type="nucleotide sequence ID" value="NM_017857.3"/>
</dbReference>
<dbReference type="RefSeq" id="XP_047283133.1">
    <molecule id="Q8TE77-2"/>
    <property type="nucleotide sequence ID" value="XM_047427177.1"/>
</dbReference>
<dbReference type="RefSeq" id="XP_054225192.1">
    <molecule id="Q8TE77-2"/>
    <property type="nucleotide sequence ID" value="XM_054369217.1"/>
</dbReference>
<dbReference type="SMR" id="Q8TE77"/>
<dbReference type="BioGRID" id="120299">
    <property type="interactions" value="79"/>
</dbReference>
<dbReference type="FunCoup" id="Q8TE77">
    <property type="interactions" value="564"/>
</dbReference>
<dbReference type="IntAct" id="Q8TE77">
    <property type="interactions" value="37"/>
</dbReference>
<dbReference type="MINT" id="Q8TE77"/>
<dbReference type="STRING" id="9606.ENSP00000312081"/>
<dbReference type="DEPOD" id="SSH3"/>
<dbReference type="GlyGen" id="Q8TE77">
    <property type="glycosylation" value="1 site, 1 O-linked glycan (1 site)"/>
</dbReference>
<dbReference type="iPTMnet" id="Q8TE77"/>
<dbReference type="PhosphoSitePlus" id="Q8TE77"/>
<dbReference type="BioMuta" id="SSH3"/>
<dbReference type="DMDM" id="82582268"/>
<dbReference type="CPTAC" id="CPTAC-591"/>
<dbReference type="CPTAC" id="CPTAC-592"/>
<dbReference type="jPOST" id="Q8TE77"/>
<dbReference type="MassIVE" id="Q8TE77"/>
<dbReference type="PaxDb" id="9606-ENSP00000312081"/>
<dbReference type="PeptideAtlas" id="Q8TE77"/>
<dbReference type="ProteomicsDB" id="74414">
    <molecule id="Q8TE77-1"/>
</dbReference>
<dbReference type="ProteomicsDB" id="74415">
    <molecule id="Q8TE77-2"/>
</dbReference>
<dbReference type="ProteomicsDB" id="74416">
    <molecule id="Q8TE77-3"/>
</dbReference>
<dbReference type="ProteomicsDB" id="74417">
    <molecule id="Q8TE77-4"/>
</dbReference>
<dbReference type="ProteomicsDB" id="74418">
    <molecule id="Q8TE77-5"/>
</dbReference>
<dbReference type="Pumba" id="Q8TE77"/>
<dbReference type="Antibodypedia" id="16449">
    <property type="antibodies" value="233 antibodies from 32 providers"/>
</dbReference>
<dbReference type="DNASU" id="54961"/>
<dbReference type="Ensembl" id="ENST00000308127.9">
    <molecule id="Q8TE77-1"/>
    <property type="protein sequence ID" value="ENSP00000312081.4"/>
    <property type="gene ID" value="ENSG00000172830.13"/>
</dbReference>
<dbReference type="Ensembl" id="ENST00000376757.9">
    <molecule id="Q8TE77-3"/>
    <property type="protein sequence ID" value="ENSP00000365948.6"/>
    <property type="gene ID" value="ENSG00000172830.13"/>
</dbReference>
<dbReference type="Ensembl" id="ENST00000532881.5">
    <molecule id="Q8TE77-2"/>
    <property type="protein sequence ID" value="ENSP00000431788.2"/>
    <property type="gene ID" value="ENSG00000172830.13"/>
</dbReference>
<dbReference type="GeneID" id="54961"/>
<dbReference type="KEGG" id="hsa:54961"/>
<dbReference type="MANE-Select" id="ENST00000308127.9">
    <property type="protein sequence ID" value="ENSP00000312081.4"/>
    <property type="RefSeq nucleotide sequence ID" value="NM_017857.4"/>
    <property type="RefSeq protein sequence ID" value="NP_060327.3"/>
</dbReference>
<dbReference type="UCSC" id="uc001okj.4">
    <molecule id="Q8TE77-1"/>
    <property type="organism name" value="human"/>
</dbReference>
<dbReference type="AGR" id="HGNC:30581"/>
<dbReference type="CTD" id="54961"/>
<dbReference type="DisGeNET" id="54961"/>
<dbReference type="GeneCards" id="SSH3"/>
<dbReference type="HGNC" id="HGNC:30581">
    <property type="gene designation" value="SSH3"/>
</dbReference>
<dbReference type="HPA" id="ENSG00000172830">
    <property type="expression patterns" value="Low tissue specificity"/>
</dbReference>
<dbReference type="MIM" id="606780">
    <property type="type" value="gene"/>
</dbReference>
<dbReference type="neXtProt" id="NX_Q8TE77"/>
<dbReference type="OpenTargets" id="ENSG00000172830"/>
<dbReference type="PharmGKB" id="PA134929326"/>
<dbReference type="VEuPathDB" id="HostDB:ENSG00000172830"/>
<dbReference type="eggNOG" id="KOG1716">
    <property type="taxonomic scope" value="Eukaryota"/>
</dbReference>
<dbReference type="GeneTree" id="ENSGT00940000160322"/>
<dbReference type="HOGENOM" id="CLU_006650_3_1_1"/>
<dbReference type="InParanoid" id="Q8TE77"/>
<dbReference type="OMA" id="WATHYQE"/>
<dbReference type="OrthoDB" id="5779068at2759"/>
<dbReference type="PAN-GO" id="Q8TE77">
    <property type="GO annotations" value="5 GO annotations based on evolutionary models"/>
</dbReference>
<dbReference type="PhylomeDB" id="Q8TE77"/>
<dbReference type="TreeFam" id="TF319444"/>
<dbReference type="PathwayCommons" id="Q8TE77"/>
<dbReference type="SignaLink" id="Q8TE77"/>
<dbReference type="SIGNOR" id="Q8TE77"/>
<dbReference type="BioGRID-ORCS" id="54961">
    <property type="hits" value="14 hits in 1179 CRISPR screens"/>
</dbReference>
<dbReference type="ChiTaRS" id="SSH3">
    <property type="organism name" value="human"/>
</dbReference>
<dbReference type="GeneWiki" id="SSH3"/>
<dbReference type="GenomeRNAi" id="54961"/>
<dbReference type="Pharos" id="Q8TE77">
    <property type="development level" value="Tbio"/>
</dbReference>
<dbReference type="PRO" id="PR:Q8TE77"/>
<dbReference type="Proteomes" id="UP000005640">
    <property type="component" value="Chromosome 11"/>
</dbReference>
<dbReference type="RNAct" id="Q8TE77">
    <property type="molecule type" value="protein"/>
</dbReference>
<dbReference type="Bgee" id="ENSG00000172830">
    <property type="expression patterns" value="Expressed in lower esophagus mucosa and 181 other cell types or tissues"/>
</dbReference>
<dbReference type="ExpressionAtlas" id="Q8TE77">
    <property type="expression patterns" value="baseline and differential"/>
</dbReference>
<dbReference type="GO" id="GO:0005737">
    <property type="term" value="C:cytoplasm"/>
    <property type="evidence" value="ECO:0000318"/>
    <property type="project" value="GO_Central"/>
</dbReference>
<dbReference type="GO" id="GO:0005856">
    <property type="term" value="C:cytoskeleton"/>
    <property type="evidence" value="ECO:0007669"/>
    <property type="project" value="UniProtKB-SubCell"/>
</dbReference>
<dbReference type="GO" id="GO:0005634">
    <property type="term" value="C:nucleus"/>
    <property type="evidence" value="ECO:0007669"/>
    <property type="project" value="UniProtKB-SubCell"/>
</dbReference>
<dbReference type="GO" id="GO:0003779">
    <property type="term" value="F:actin binding"/>
    <property type="evidence" value="ECO:0000318"/>
    <property type="project" value="GO_Central"/>
</dbReference>
<dbReference type="GO" id="GO:0004721">
    <property type="term" value="F:phosphoprotein phosphatase activity"/>
    <property type="evidence" value="ECO:0000318"/>
    <property type="project" value="GO_Central"/>
</dbReference>
<dbReference type="GO" id="GO:0004722">
    <property type="term" value="F:protein serine/threonine phosphatase activity"/>
    <property type="evidence" value="ECO:0007669"/>
    <property type="project" value="UniProtKB-EC"/>
</dbReference>
<dbReference type="GO" id="GO:0004725">
    <property type="term" value="F:protein tyrosine phosphatase activity"/>
    <property type="evidence" value="ECO:0007669"/>
    <property type="project" value="UniProtKB-EC"/>
</dbReference>
<dbReference type="GO" id="GO:0030036">
    <property type="term" value="P:actin cytoskeleton organization"/>
    <property type="evidence" value="ECO:0000318"/>
    <property type="project" value="GO_Central"/>
</dbReference>
<dbReference type="GO" id="GO:0030837">
    <property type="term" value="P:negative regulation of actin filament polymerization"/>
    <property type="evidence" value="ECO:0000318"/>
    <property type="project" value="GO_Central"/>
</dbReference>
<dbReference type="CDD" id="cd14571">
    <property type="entry name" value="DSP_slingshot_3"/>
    <property type="match status" value="1"/>
</dbReference>
<dbReference type="CDD" id="cd11652">
    <property type="entry name" value="SSH-N"/>
    <property type="match status" value="1"/>
</dbReference>
<dbReference type="FunFam" id="3.90.190.10:FF:000004">
    <property type="entry name" value="Protein phosphatase Slingshot homolog 2"/>
    <property type="match status" value="1"/>
</dbReference>
<dbReference type="Gene3D" id="3.90.190.10">
    <property type="entry name" value="Protein tyrosine phosphatase superfamily"/>
    <property type="match status" value="1"/>
</dbReference>
<dbReference type="InterPro" id="IPR014876">
    <property type="entry name" value="DEK_C"/>
</dbReference>
<dbReference type="InterPro" id="IPR000340">
    <property type="entry name" value="Dual-sp_phosphatase_cat-dom"/>
</dbReference>
<dbReference type="InterPro" id="IPR043587">
    <property type="entry name" value="Phosphatase_SSH-like"/>
</dbReference>
<dbReference type="InterPro" id="IPR029021">
    <property type="entry name" value="Prot-tyrosine_phosphatase-like"/>
</dbReference>
<dbReference type="InterPro" id="IPR043588">
    <property type="entry name" value="SSH-N"/>
</dbReference>
<dbReference type="InterPro" id="IPR016130">
    <property type="entry name" value="Tyr_Pase_AS"/>
</dbReference>
<dbReference type="InterPro" id="IPR000387">
    <property type="entry name" value="Tyr_Pase_dom"/>
</dbReference>
<dbReference type="InterPro" id="IPR020422">
    <property type="entry name" value="TYR_PHOSPHATASE_DUAL_dom"/>
</dbReference>
<dbReference type="PANTHER" id="PTHR45864:SF4">
    <property type="entry name" value="PROTEIN PHOSPHATASE SLINGSHOT HOMOLOG 3"/>
    <property type="match status" value="1"/>
</dbReference>
<dbReference type="PANTHER" id="PTHR45864">
    <property type="entry name" value="SLINGSHOT PROTEIN PHOSPHATASE HOMOLOG"/>
    <property type="match status" value="1"/>
</dbReference>
<dbReference type="Pfam" id="PF08766">
    <property type="entry name" value="DEK_C"/>
    <property type="match status" value="1"/>
</dbReference>
<dbReference type="Pfam" id="PF00782">
    <property type="entry name" value="DSPc"/>
    <property type="match status" value="1"/>
</dbReference>
<dbReference type="Pfam" id="PF23040">
    <property type="entry name" value="PH_SSH1-like_1st"/>
    <property type="match status" value="1"/>
</dbReference>
<dbReference type="SMART" id="SM00195">
    <property type="entry name" value="DSPc"/>
    <property type="match status" value="1"/>
</dbReference>
<dbReference type="SUPFAM" id="SSF52799">
    <property type="entry name" value="(Phosphotyrosine protein) phosphatases II"/>
    <property type="match status" value="1"/>
</dbReference>
<dbReference type="SUPFAM" id="SSF109715">
    <property type="entry name" value="DEK C-terminal domain"/>
    <property type="match status" value="1"/>
</dbReference>
<dbReference type="PROSITE" id="PS51998">
    <property type="entry name" value="DEK_C"/>
    <property type="match status" value="1"/>
</dbReference>
<dbReference type="PROSITE" id="PS00383">
    <property type="entry name" value="TYR_PHOSPHATASE_1"/>
    <property type="match status" value="1"/>
</dbReference>
<dbReference type="PROSITE" id="PS50056">
    <property type="entry name" value="TYR_PHOSPHATASE_2"/>
    <property type="match status" value="1"/>
</dbReference>
<dbReference type="PROSITE" id="PS50054">
    <property type="entry name" value="TYR_PHOSPHATASE_DUAL"/>
    <property type="match status" value="1"/>
</dbReference>
<protein>
    <recommendedName>
        <fullName>Protein phosphatase Slingshot homolog 3</fullName>
        <ecNumber>3.1.3.16</ecNumber>
        <ecNumber>3.1.3.48</ecNumber>
    </recommendedName>
    <alternativeName>
        <fullName>SSH-like protein 3</fullName>
        <shortName>SSH-3L</shortName>
        <shortName>hSSH-3L</shortName>
    </alternativeName>
</protein>
<sequence>MALVTVSRSPPGSGASTPVGPWDQAVQRRSRLQRRQSFAVLRGAVLGLQDGGDNDDAAEASSEPTEKAPSEEELHGDQTDFGQGSQSPQKQEEQRQHLHLMVQLLRPQDDIRLAAQLEAPRPPRLRYLLVVSTREGEGLSQDETVLLGVDFPDSSSPSCTLGLVLPLWSDTQVYLDGDGGFSVTSGGQSRIFKPISIQTMWATLQVLHQACEAALGSGLVPGGSALTWASHYQERLNSEQSCLNEWTAMADLESLRPPSAEPGGSSEQEQMEQAIRAELWKVLDVSDLESVTSKEIRQALELRLGLPLQQYRDFIDNQMLLLVAQRDRASRIFPHLYLGSEWNAANLEELQRNRVTHILNMAREIDNFYPERFTYHNVRLWDEESAQLLPHWKETHRFIEAARAQGTHVLVHCKMGVSRSAATVLAYAMKQYECSLEQALRHVQELRPIARPNPGFLRQLQIYQGILTASRQSHVWEQKVGGVSPEEHPAPEVSTPFPPLPPEPEGGGEEKVVGMEESQAAPKEEPGPRPRINLRGVMRSISLLEPSLELESTSETSDMPEVFSSHESSHEEPLQPFPQLARTKGGQQVDRGPQPALKSRQSVVTLQGSAVVANRTQAFQEQEQGQGQGQGEPCISSTPRFRKVVRQASVHDSGEEGEA</sequence>
<comment type="function">
    <text evidence="1">Protein phosphatase which may play a role in the regulation of actin filament dynamics. Can dephosphorylate and activate the actin binding/depolymerizing factor cofilin, which subsequently binds to actin filaments and stimulates their disassembly (By similarity).</text>
</comment>
<comment type="catalytic activity">
    <reaction evidence="5">
        <text>O-phospho-L-tyrosyl-[protein] + H2O = L-tyrosyl-[protein] + phosphate</text>
        <dbReference type="Rhea" id="RHEA:10684"/>
        <dbReference type="Rhea" id="RHEA-COMP:10136"/>
        <dbReference type="Rhea" id="RHEA-COMP:20101"/>
        <dbReference type="ChEBI" id="CHEBI:15377"/>
        <dbReference type="ChEBI" id="CHEBI:43474"/>
        <dbReference type="ChEBI" id="CHEBI:46858"/>
        <dbReference type="ChEBI" id="CHEBI:61978"/>
        <dbReference type="EC" id="3.1.3.48"/>
    </reaction>
</comment>
<comment type="catalytic activity">
    <reaction>
        <text>O-phospho-L-seryl-[protein] + H2O = L-seryl-[protein] + phosphate</text>
        <dbReference type="Rhea" id="RHEA:20629"/>
        <dbReference type="Rhea" id="RHEA-COMP:9863"/>
        <dbReference type="Rhea" id="RHEA-COMP:11604"/>
        <dbReference type="ChEBI" id="CHEBI:15377"/>
        <dbReference type="ChEBI" id="CHEBI:29999"/>
        <dbReference type="ChEBI" id="CHEBI:43474"/>
        <dbReference type="ChEBI" id="CHEBI:83421"/>
        <dbReference type="EC" id="3.1.3.16"/>
    </reaction>
</comment>
<comment type="catalytic activity">
    <reaction>
        <text>O-phospho-L-threonyl-[protein] + H2O = L-threonyl-[protein] + phosphate</text>
        <dbReference type="Rhea" id="RHEA:47004"/>
        <dbReference type="Rhea" id="RHEA-COMP:11060"/>
        <dbReference type="Rhea" id="RHEA-COMP:11605"/>
        <dbReference type="ChEBI" id="CHEBI:15377"/>
        <dbReference type="ChEBI" id="CHEBI:30013"/>
        <dbReference type="ChEBI" id="CHEBI:43474"/>
        <dbReference type="ChEBI" id="CHEBI:61977"/>
        <dbReference type="EC" id="3.1.3.16"/>
    </reaction>
</comment>
<comment type="subunit">
    <text evidence="1">Does not bind to, or colocalize with, filamentous actin.</text>
</comment>
<comment type="interaction">
    <interactant intactId="EBI-8743776">
        <id>Q8TE77</id>
    </interactant>
    <interactant intactId="EBI-713635">
        <id>O43639</id>
        <label>NCK2</label>
    </interactant>
    <organismsDiffer>false</organismsDiffer>
    <experiments>3</experiments>
</comment>
<comment type="subcellular location">
    <subcellularLocation>
        <location evidence="1">Cytoplasm</location>
        <location evidence="1">Cytoskeleton</location>
    </subcellularLocation>
    <subcellularLocation>
        <location evidence="1">Nucleus</location>
    </subcellularLocation>
</comment>
<comment type="alternative products">
    <event type="alternative splicing"/>
    <isoform>
        <id>Q8TE77-1</id>
        <name>1</name>
        <name>L</name>
        <sequence type="displayed"/>
    </isoform>
    <isoform>
        <id>Q8TE77-2</id>
        <name>2</name>
        <sequence type="described" ref="VSP_016335 VSP_016336"/>
    </isoform>
    <isoform>
        <id>Q8TE77-3</id>
        <name>3</name>
        <sequence type="described" ref="VSP_016331 VSP_016332"/>
    </isoform>
    <isoform>
        <id>Q8TE77-4</id>
        <name>4</name>
        <sequence type="described" ref="VSP_016333"/>
    </isoform>
    <isoform>
        <id>Q8TE77-5</id>
        <name>5</name>
        <sequence type="described" ref="VSP_016330 VSP_016334 VSP_016335 VSP_016336"/>
    </isoform>
</comment>
<comment type="miscellaneous">
    <text>Tyrosine phosphatase activity has not been demonstrated for this protein to date.</text>
</comment>
<comment type="similarity">
    <text evidence="9">Belongs to the protein-tyrosine phosphatase family.</text>
</comment>
<reference key="1">
    <citation type="journal article" date="2002" name="Cell">
        <title>Control of actin reorganization by Slingshot, a family of phosphatases that dephosphorylate ADF/cofilin.</title>
        <authorList>
            <person name="Niwa R."/>
            <person name="Nagata-Ohashi K."/>
            <person name="Takeichi M."/>
            <person name="Mizuno K."/>
            <person name="Uemura T."/>
        </authorList>
    </citation>
    <scope>NUCLEOTIDE SEQUENCE [MRNA] (ISOFORM 2)</scope>
</reference>
<reference key="2">
    <citation type="journal article" date="2003" name="Genes Cells">
        <title>Differential activities, subcellular distribution and tissue expression patterns of three members of Slingshot family phosphatases that dephosphorylate cofilin.</title>
        <authorList>
            <person name="Ohta Y."/>
            <person name="Kousaka K."/>
            <person name="Nagata-Ohashi K."/>
            <person name="Ohashi K."/>
            <person name="Muramoto A."/>
            <person name="Shima Y."/>
            <person name="Niwa R."/>
            <person name="Uemura T."/>
            <person name="Mizuno K."/>
        </authorList>
    </citation>
    <scope>NUCLEOTIDE SEQUENCE [MRNA] (ISOFORM 1)</scope>
</reference>
<reference key="3">
    <citation type="journal article" date="2004" name="Nat. Genet.">
        <title>Complete sequencing and characterization of 21,243 full-length human cDNAs.</title>
        <authorList>
            <person name="Ota T."/>
            <person name="Suzuki Y."/>
            <person name="Nishikawa T."/>
            <person name="Otsuki T."/>
            <person name="Sugiyama T."/>
            <person name="Irie R."/>
            <person name="Wakamatsu A."/>
            <person name="Hayashi K."/>
            <person name="Sato H."/>
            <person name="Nagai K."/>
            <person name="Kimura K."/>
            <person name="Makita H."/>
            <person name="Sekine M."/>
            <person name="Obayashi M."/>
            <person name="Nishi T."/>
            <person name="Shibahara T."/>
            <person name="Tanaka T."/>
            <person name="Ishii S."/>
            <person name="Yamamoto J."/>
            <person name="Saito K."/>
            <person name="Kawai Y."/>
            <person name="Isono Y."/>
            <person name="Nakamura Y."/>
            <person name="Nagahari K."/>
            <person name="Murakami K."/>
            <person name="Yasuda T."/>
            <person name="Iwayanagi T."/>
            <person name="Wagatsuma M."/>
            <person name="Shiratori A."/>
            <person name="Sudo H."/>
            <person name="Hosoiri T."/>
            <person name="Kaku Y."/>
            <person name="Kodaira H."/>
            <person name="Kondo H."/>
            <person name="Sugawara M."/>
            <person name="Takahashi M."/>
            <person name="Kanda K."/>
            <person name="Yokoi T."/>
            <person name="Furuya T."/>
            <person name="Kikkawa E."/>
            <person name="Omura Y."/>
            <person name="Abe K."/>
            <person name="Kamihara K."/>
            <person name="Katsuta N."/>
            <person name="Sato K."/>
            <person name="Tanikawa M."/>
            <person name="Yamazaki M."/>
            <person name="Ninomiya K."/>
            <person name="Ishibashi T."/>
            <person name="Yamashita H."/>
            <person name="Murakawa K."/>
            <person name="Fujimori K."/>
            <person name="Tanai H."/>
            <person name="Kimata M."/>
            <person name="Watanabe M."/>
            <person name="Hiraoka S."/>
            <person name="Chiba Y."/>
            <person name="Ishida S."/>
            <person name="Ono Y."/>
            <person name="Takiguchi S."/>
            <person name="Watanabe S."/>
            <person name="Yosida M."/>
            <person name="Hotuta T."/>
            <person name="Kusano J."/>
            <person name="Kanehori K."/>
            <person name="Takahashi-Fujii A."/>
            <person name="Hara H."/>
            <person name="Tanase T.-O."/>
            <person name="Nomura Y."/>
            <person name="Togiya S."/>
            <person name="Komai F."/>
            <person name="Hara R."/>
            <person name="Takeuchi K."/>
            <person name="Arita M."/>
            <person name="Imose N."/>
            <person name="Musashino K."/>
            <person name="Yuuki H."/>
            <person name="Oshima A."/>
            <person name="Sasaki N."/>
            <person name="Aotsuka S."/>
            <person name="Yoshikawa Y."/>
            <person name="Matsunawa H."/>
            <person name="Ichihara T."/>
            <person name="Shiohata N."/>
            <person name="Sano S."/>
            <person name="Moriya S."/>
            <person name="Momiyama H."/>
            <person name="Satoh N."/>
            <person name="Takami S."/>
            <person name="Terashima Y."/>
            <person name="Suzuki O."/>
            <person name="Nakagawa S."/>
            <person name="Senoh A."/>
            <person name="Mizoguchi H."/>
            <person name="Goto Y."/>
            <person name="Shimizu F."/>
            <person name="Wakebe H."/>
            <person name="Hishigaki H."/>
            <person name="Watanabe T."/>
            <person name="Sugiyama A."/>
            <person name="Takemoto M."/>
            <person name="Kawakami B."/>
            <person name="Yamazaki M."/>
            <person name="Watanabe K."/>
            <person name="Kumagai A."/>
            <person name="Itakura S."/>
            <person name="Fukuzumi Y."/>
            <person name="Fujimori Y."/>
            <person name="Komiyama M."/>
            <person name="Tashiro H."/>
            <person name="Tanigami A."/>
            <person name="Fujiwara T."/>
            <person name="Ono T."/>
            <person name="Yamada K."/>
            <person name="Fujii Y."/>
            <person name="Ozaki K."/>
            <person name="Hirao M."/>
            <person name="Ohmori Y."/>
            <person name="Kawabata A."/>
            <person name="Hikiji T."/>
            <person name="Kobatake N."/>
            <person name="Inagaki H."/>
            <person name="Ikema Y."/>
            <person name="Okamoto S."/>
            <person name="Okitani R."/>
            <person name="Kawakami T."/>
            <person name="Noguchi S."/>
            <person name="Itoh T."/>
            <person name="Shigeta K."/>
            <person name="Senba T."/>
            <person name="Matsumura K."/>
            <person name="Nakajima Y."/>
            <person name="Mizuno T."/>
            <person name="Morinaga M."/>
            <person name="Sasaki M."/>
            <person name="Togashi T."/>
            <person name="Oyama M."/>
            <person name="Hata H."/>
            <person name="Watanabe M."/>
            <person name="Komatsu T."/>
            <person name="Mizushima-Sugano J."/>
            <person name="Satoh T."/>
            <person name="Shirai Y."/>
            <person name="Takahashi Y."/>
            <person name="Nakagawa K."/>
            <person name="Okumura K."/>
            <person name="Nagase T."/>
            <person name="Nomura N."/>
            <person name="Kikuchi H."/>
            <person name="Masuho Y."/>
            <person name="Yamashita R."/>
            <person name="Nakai K."/>
            <person name="Yada T."/>
            <person name="Nakamura Y."/>
            <person name="Ohara O."/>
            <person name="Isogai T."/>
            <person name="Sugano S."/>
        </authorList>
    </citation>
    <scope>NUCLEOTIDE SEQUENCE [LARGE SCALE MRNA] (ISOFORMS 1; 3; 4 AND 5)</scope>
    <source>
        <tissue>Cerebellum</tissue>
        <tissue>Ovarian carcinoma</tissue>
    </source>
</reference>
<reference key="4">
    <citation type="journal article" date="2004" name="Genome Res.">
        <title>The status, quality, and expansion of the NIH full-length cDNA project: the Mammalian Gene Collection (MGC).</title>
        <authorList>
            <consortium name="The MGC Project Team"/>
        </authorList>
    </citation>
    <scope>NUCLEOTIDE SEQUENCE [LARGE SCALE MRNA] (ISOFORM 1)</scope>
    <source>
        <tissue>Uterus</tissue>
    </source>
</reference>
<reference key="5">
    <citation type="journal article" date="2007" name="Science">
        <title>ATM and ATR substrate analysis reveals extensive protein networks responsive to DNA damage.</title>
        <authorList>
            <person name="Matsuoka S."/>
            <person name="Ballif B.A."/>
            <person name="Smogorzewska A."/>
            <person name="McDonald E.R. III"/>
            <person name="Hurov K.E."/>
            <person name="Luo J."/>
            <person name="Bakalarski C.E."/>
            <person name="Zhao Z."/>
            <person name="Solimini N."/>
            <person name="Lerenthal Y."/>
            <person name="Shiloh Y."/>
            <person name="Gygi S.P."/>
            <person name="Elledge S.J."/>
        </authorList>
    </citation>
    <scope>PHOSPHORYLATION [LARGE SCALE ANALYSIS] AT SER-85 AND SER-87</scope>
    <scope>IDENTIFICATION BY MASS SPECTROMETRY [LARGE SCALE ANALYSIS]</scope>
    <source>
        <tissue>Embryonic kidney</tissue>
    </source>
</reference>
<reference key="6">
    <citation type="journal article" date="2008" name="Mol. Cell">
        <title>Kinase-selective enrichment enables quantitative phosphoproteomics of the kinome across the cell cycle.</title>
        <authorList>
            <person name="Daub H."/>
            <person name="Olsen J.V."/>
            <person name="Bairlein M."/>
            <person name="Gnad F."/>
            <person name="Oppermann F.S."/>
            <person name="Korner R."/>
            <person name="Greff Z."/>
            <person name="Keri G."/>
            <person name="Stemmann O."/>
            <person name="Mann M."/>
        </authorList>
    </citation>
    <scope>IDENTIFICATION BY MASS SPECTROMETRY [LARGE SCALE ANALYSIS]</scope>
    <source>
        <tissue>Cervix carcinoma</tissue>
    </source>
</reference>
<reference key="7">
    <citation type="journal article" date="2008" name="Proc. Natl. Acad. Sci. U.S.A.">
        <title>A quantitative atlas of mitotic phosphorylation.</title>
        <authorList>
            <person name="Dephoure N."/>
            <person name="Zhou C."/>
            <person name="Villen J."/>
            <person name="Beausoleil S.A."/>
            <person name="Bakalarski C.E."/>
            <person name="Elledge S.J."/>
            <person name="Gygi S.P."/>
        </authorList>
    </citation>
    <scope>IDENTIFICATION BY MASS SPECTROMETRY [LARGE SCALE ANALYSIS]</scope>
    <source>
        <tissue>Cervix carcinoma</tissue>
    </source>
</reference>
<reference key="8">
    <citation type="journal article" date="2013" name="J. Proteome Res.">
        <title>Toward a comprehensive characterization of a human cancer cell phosphoproteome.</title>
        <authorList>
            <person name="Zhou H."/>
            <person name="Di Palma S."/>
            <person name="Preisinger C."/>
            <person name="Peng M."/>
            <person name="Polat A.N."/>
            <person name="Heck A.J."/>
            <person name="Mohammed S."/>
        </authorList>
    </citation>
    <scope>PHOSPHORYLATION [LARGE SCALE ANALYSIS] AT SER-9 AND SER-37</scope>
    <scope>IDENTIFICATION BY MASS SPECTROMETRY [LARGE SCALE ANALYSIS]</scope>
    <source>
        <tissue>Cervix carcinoma</tissue>
    </source>
</reference>
<reference key="9">
    <citation type="journal article" date="2014" name="J. Proteomics">
        <title>An enzyme assisted RP-RPLC approach for in-depth analysis of human liver phosphoproteome.</title>
        <authorList>
            <person name="Bian Y."/>
            <person name="Song C."/>
            <person name="Cheng K."/>
            <person name="Dong M."/>
            <person name="Wang F."/>
            <person name="Huang J."/>
            <person name="Sun D."/>
            <person name="Wang L."/>
            <person name="Ye M."/>
            <person name="Zou H."/>
        </authorList>
    </citation>
    <scope>PHOSPHORYLATION [LARGE SCALE ANALYSIS] AT SER-9; SER-37 AND SER-87</scope>
    <scope>IDENTIFICATION BY MASS SPECTROMETRY [LARGE SCALE ANALYSIS]</scope>
    <source>
        <tissue>Liver</tissue>
    </source>
</reference>
<keyword id="KW-0007">Acetylation</keyword>
<keyword id="KW-0025">Alternative splicing</keyword>
<keyword id="KW-0963">Cytoplasm</keyword>
<keyword id="KW-0206">Cytoskeleton</keyword>
<keyword id="KW-0378">Hydrolase</keyword>
<keyword id="KW-0539">Nucleus</keyword>
<keyword id="KW-0597">Phosphoprotein</keyword>
<keyword id="KW-0904">Protein phosphatase</keyword>
<keyword id="KW-1267">Proteomics identification</keyword>
<keyword id="KW-1185">Reference proteome</keyword>
<name>SSH3_HUMAN</name>
<accession>Q8TE77</accession>
<accession>Q6PK42</accession>
<accession>Q76I75</accession>
<accession>Q8N9L8</accession>
<accession>Q8WYL0</accession>
<accession>Q9NV45</accession>
<accession>Q9NWZ7</accession>
<gene>
    <name type="primary">SSH3</name>
    <name type="synonym">SSH3L</name>
</gene>